<reference key="1">
    <citation type="journal article" date="2002" name="Nat. Biotechnol.">
        <title>Genome sequence of the dissimilatory metal ion-reducing bacterium Shewanella oneidensis.</title>
        <authorList>
            <person name="Heidelberg J.F."/>
            <person name="Paulsen I.T."/>
            <person name="Nelson K.E."/>
            <person name="Gaidos E.J."/>
            <person name="Nelson W.C."/>
            <person name="Read T.D."/>
            <person name="Eisen J.A."/>
            <person name="Seshadri R."/>
            <person name="Ward N.L."/>
            <person name="Methe B.A."/>
            <person name="Clayton R.A."/>
            <person name="Meyer T."/>
            <person name="Tsapin A."/>
            <person name="Scott J."/>
            <person name="Beanan M.J."/>
            <person name="Brinkac L.M."/>
            <person name="Daugherty S.C."/>
            <person name="DeBoy R.T."/>
            <person name="Dodson R.J."/>
            <person name="Durkin A.S."/>
            <person name="Haft D.H."/>
            <person name="Kolonay J.F."/>
            <person name="Madupu R."/>
            <person name="Peterson J.D."/>
            <person name="Umayam L.A."/>
            <person name="White O."/>
            <person name="Wolf A.M."/>
            <person name="Vamathevan J.J."/>
            <person name="Weidman J.F."/>
            <person name="Impraim M."/>
            <person name="Lee K."/>
            <person name="Berry K.J."/>
            <person name="Lee C."/>
            <person name="Mueller J."/>
            <person name="Khouri H.M."/>
            <person name="Gill J."/>
            <person name="Utterback T.R."/>
            <person name="McDonald L.A."/>
            <person name="Feldblyum T.V."/>
            <person name="Smith H.O."/>
            <person name="Venter J.C."/>
            <person name="Nealson K.H."/>
            <person name="Fraser C.M."/>
        </authorList>
    </citation>
    <scope>NUCLEOTIDE SEQUENCE [LARGE SCALE GENOMIC DNA]</scope>
    <source>
        <strain>ATCC 700550 / JCM 31522 / CIP 106686 / LMG 19005 / NCIMB 14063 / MR-1</strain>
    </source>
</reference>
<organism>
    <name type="scientific">Shewanella oneidensis (strain ATCC 700550 / JCM 31522 / CIP 106686 / LMG 19005 / NCIMB 14063 / MR-1)</name>
    <dbReference type="NCBI Taxonomy" id="211586"/>
    <lineage>
        <taxon>Bacteria</taxon>
        <taxon>Pseudomonadati</taxon>
        <taxon>Pseudomonadota</taxon>
        <taxon>Gammaproteobacteria</taxon>
        <taxon>Alteromonadales</taxon>
        <taxon>Shewanellaceae</taxon>
        <taxon>Shewanella</taxon>
    </lineage>
</organism>
<name>PURT_SHEON</name>
<sequence>MIGTPYTEGARRAMLLGCGELGKEVAIELQRLGVEVIGVDRYPNAPAMQIAHRSHVINMLDAKALRAVIELEKPHLVIPEIEAIATQTLVEMEAEGLNVVPTARATKLTMDREGIRRLAAETLGLPTSPYFFCDTETEFNQAISKIGVPCVVKPVMSSSGKGQSVIRNVAQSAKAWQYAQEGGRAGGGRVIVEGFIPFDYEITLLTISAVNGIHFCAPIGHRQEDGDYRESWQPQAMSADVLAKSQAIASKVVEALGGYGLFGVELFVKGSDVYFSEVSPRPHDTGLVTLISQDLSEFALHVRAILGLPIPNIHQHGPSASAVVLVEGKSKNIRYQGLAAALAAENTQLRLFAKPEIDGRRRLGVALARDKDIDSAVNKALDSAAKVQVIF</sequence>
<gene>
    <name evidence="1" type="primary">purT</name>
    <name type="ordered locus">SO_3613</name>
</gene>
<evidence type="ECO:0000255" key="1">
    <source>
        <dbReference type="HAMAP-Rule" id="MF_01643"/>
    </source>
</evidence>
<protein>
    <recommendedName>
        <fullName evidence="1">Formate-dependent phosphoribosylglycinamide formyltransferase</fullName>
        <ecNumber evidence="1">6.3.1.21</ecNumber>
    </recommendedName>
    <alternativeName>
        <fullName evidence="1">5'-phosphoribosylglycinamide transformylase 2</fullName>
    </alternativeName>
    <alternativeName>
        <fullName evidence="1">Formate-dependent GAR transformylase</fullName>
    </alternativeName>
    <alternativeName>
        <fullName evidence="1">GAR transformylase 2</fullName>
        <shortName evidence="1">GART 2</shortName>
    </alternativeName>
    <alternativeName>
        <fullName evidence="1">Non-folate glycinamide ribonucleotide transformylase</fullName>
    </alternativeName>
    <alternativeName>
        <fullName evidence="1">Phosphoribosylglycinamide formyltransferase 2</fullName>
    </alternativeName>
</protein>
<accession>Q8EBB7</accession>
<proteinExistence type="inferred from homology"/>
<feature type="chain" id="PRO_0000319232" description="Formate-dependent phosphoribosylglycinamide formyltransferase">
    <location>
        <begin position="1"/>
        <end position="391"/>
    </location>
</feature>
<feature type="domain" description="ATP-grasp" evidence="1">
    <location>
        <begin position="117"/>
        <end position="306"/>
    </location>
</feature>
<feature type="binding site" evidence="1">
    <location>
        <begin position="20"/>
        <end position="21"/>
    </location>
    <ligand>
        <name>N(1)-(5-phospho-beta-D-ribosyl)glycinamide</name>
        <dbReference type="ChEBI" id="CHEBI:143788"/>
    </ligand>
</feature>
<feature type="binding site" evidence="1">
    <location>
        <position position="80"/>
    </location>
    <ligand>
        <name>N(1)-(5-phospho-beta-D-ribosyl)glycinamide</name>
        <dbReference type="ChEBI" id="CHEBI:143788"/>
    </ligand>
</feature>
<feature type="binding site" evidence="1">
    <location>
        <position position="112"/>
    </location>
    <ligand>
        <name>ATP</name>
        <dbReference type="ChEBI" id="CHEBI:30616"/>
    </ligand>
</feature>
<feature type="binding site" evidence="1">
    <location>
        <position position="153"/>
    </location>
    <ligand>
        <name>ATP</name>
        <dbReference type="ChEBI" id="CHEBI:30616"/>
    </ligand>
</feature>
<feature type="binding site" evidence="1">
    <location>
        <begin position="158"/>
        <end position="163"/>
    </location>
    <ligand>
        <name>ATP</name>
        <dbReference type="ChEBI" id="CHEBI:30616"/>
    </ligand>
</feature>
<feature type="binding site" evidence="1">
    <location>
        <begin position="193"/>
        <end position="196"/>
    </location>
    <ligand>
        <name>ATP</name>
        <dbReference type="ChEBI" id="CHEBI:30616"/>
    </ligand>
</feature>
<feature type="binding site" evidence="1">
    <location>
        <position position="201"/>
    </location>
    <ligand>
        <name>ATP</name>
        <dbReference type="ChEBI" id="CHEBI:30616"/>
    </ligand>
</feature>
<feature type="binding site" evidence="1">
    <location>
        <position position="265"/>
    </location>
    <ligand>
        <name>Mg(2+)</name>
        <dbReference type="ChEBI" id="CHEBI:18420"/>
    </ligand>
</feature>
<feature type="binding site" evidence="1">
    <location>
        <position position="277"/>
    </location>
    <ligand>
        <name>Mg(2+)</name>
        <dbReference type="ChEBI" id="CHEBI:18420"/>
    </ligand>
</feature>
<feature type="binding site" evidence="1">
    <location>
        <position position="284"/>
    </location>
    <ligand>
        <name>N(1)-(5-phospho-beta-D-ribosyl)glycinamide</name>
        <dbReference type="ChEBI" id="CHEBI:143788"/>
    </ligand>
</feature>
<feature type="binding site" evidence="1">
    <location>
        <position position="354"/>
    </location>
    <ligand>
        <name>N(1)-(5-phospho-beta-D-ribosyl)glycinamide</name>
        <dbReference type="ChEBI" id="CHEBI:143788"/>
    </ligand>
</feature>
<feature type="binding site" evidence="1">
    <location>
        <begin position="361"/>
        <end position="362"/>
    </location>
    <ligand>
        <name>N(1)-(5-phospho-beta-D-ribosyl)glycinamide</name>
        <dbReference type="ChEBI" id="CHEBI:143788"/>
    </ligand>
</feature>
<keyword id="KW-0067">ATP-binding</keyword>
<keyword id="KW-0436">Ligase</keyword>
<keyword id="KW-0460">Magnesium</keyword>
<keyword id="KW-0479">Metal-binding</keyword>
<keyword id="KW-0547">Nucleotide-binding</keyword>
<keyword id="KW-0658">Purine biosynthesis</keyword>
<keyword id="KW-1185">Reference proteome</keyword>
<comment type="function">
    <text evidence="1">Involved in the de novo purine biosynthesis. Catalyzes the transfer of formate to 5-phospho-ribosyl-glycinamide (GAR), producing 5-phospho-ribosyl-N-formylglycinamide (FGAR). Formate is provided by PurU via hydrolysis of 10-formyl-tetrahydrofolate.</text>
</comment>
<comment type="catalytic activity">
    <reaction evidence="1">
        <text>N(1)-(5-phospho-beta-D-ribosyl)glycinamide + formate + ATP = N(2)-formyl-N(1)-(5-phospho-beta-D-ribosyl)glycinamide + ADP + phosphate + H(+)</text>
        <dbReference type="Rhea" id="RHEA:24829"/>
        <dbReference type="ChEBI" id="CHEBI:15378"/>
        <dbReference type="ChEBI" id="CHEBI:15740"/>
        <dbReference type="ChEBI" id="CHEBI:30616"/>
        <dbReference type="ChEBI" id="CHEBI:43474"/>
        <dbReference type="ChEBI" id="CHEBI:143788"/>
        <dbReference type="ChEBI" id="CHEBI:147286"/>
        <dbReference type="ChEBI" id="CHEBI:456216"/>
        <dbReference type="EC" id="6.3.1.21"/>
    </reaction>
    <physiologicalReaction direction="left-to-right" evidence="1">
        <dbReference type="Rhea" id="RHEA:24830"/>
    </physiologicalReaction>
</comment>
<comment type="pathway">
    <text evidence="1">Purine metabolism; IMP biosynthesis via de novo pathway; N(2)-formyl-N(1)-(5-phospho-D-ribosyl)glycinamide from N(1)-(5-phospho-D-ribosyl)glycinamide (formate route): step 1/1.</text>
</comment>
<comment type="subunit">
    <text evidence="1">Homodimer.</text>
</comment>
<comment type="similarity">
    <text evidence="1">Belongs to the PurK/PurT family.</text>
</comment>
<dbReference type="EC" id="6.3.1.21" evidence="1"/>
<dbReference type="EMBL" id="AE014299">
    <property type="protein sequence ID" value="AAN56600.2"/>
    <property type="molecule type" value="Genomic_DNA"/>
</dbReference>
<dbReference type="RefSeq" id="NP_719156.2">
    <property type="nucleotide sequence ID" value="NC_004347.2"/>
</dbReference>
<dbReference type="RefSeq" id="WP_011073423.1">
    <property type="nucleotide sequence ID" value="NC_004347.2"/>
</dbReference>
<dbReference type="SMR" id="Q8EBB7"/>
<dbReference type="STRING" id="211586.SO_3613"/>
<dbReference type="PaxDb" id="211586-SO_3613"/>
<dbReference type="KEGG" id="son:SO_3613"/>
<dbReference type="PATRIC" id="fig|211586.12.peg.3505"/>
<dbReference type="eggNOG" id="COG0027">
    <property type="taxonomic scope" value="Bacteria"/>
</dbReference>
<dbReference type="HOGENOM" id="CLU_011534_1_3_6"/>
<dbReference type="OrthoDB" id="9804625at2"/>
<dbReference type="PhylomeDB" id="Q8EBB7"/>
<dbReference type="BioCyc" id="SONE211586:G1GMP-3367-MONOMER"/>
<dbReference type="UniPathway" id="UPA00074">
    <property type="reaction ID" value="UER00127"/>
</dbReference>
<dbReference type="Proteomes" id="UP000008186">
    <property type="component" value="Chromosome"/>
</dbReference>
<dbReference type="GO" id="GO:0005829">
    <property type="term" value="C:cytosol"/>
    <property type="evidence" value="ECO:0000318"/>
    <property type="project" value="GO_Central"/>
</dbReference>
<dbReference type="GO" id="GO:0005524">
    <property type="term" value="F:ATP binding"/>
    <property type="evidence" value="ECO:0007669"/>
    <property type="project" value="UniProtKB-UniRule"/>
</dbReference>
<dbReference type="GO" id="GO:0000287">
    <property type="term" value="F:magnesium ion binding"/>
    <property type="evidence" value="ECO:0007669"/>
    <property type="project" value="InterPro"/>
</dbReference>
<dbReference type="GO" id="GO:0043815">
    <property type="term" value="F:phosphoribosylglycinamide formyltransferase 2 activity"/>
    <property type="evidence" value="ECO:0007669"/>
    <property type="project" value="UniProtKB-UniRule"/>
</dbReference>
<dbReference type="GO" id="GO:0004644">
    <property type="term" value="F:phosphoribosylglycinamide formyltransferase activity"/>
    <property type="evidence" value="ECO:0007669"/>
    <property type="project" value="InterPro"/>
</dbReference>
<dbReference type="GO" id="GO:0006189">
    <property type="term" value="P:'de novo' IMP biosynthetic process"/>
    <property type="evidence" value="ECO:0007669"/>
    <property type="project" value="UniProtKB-UniRule"/>
</dbReference>
<dbReference type="FunFam" id="3.30.1490.20:FF:000013">
    <property type="entry name" value="Formate-dependent phosphoribosylglycinamide formyltransferase"/>
    <property type="match status" value="1"/>
</dbReference>
<dbReference type="FunFam" id="3.30.470.20:FF:000027">
    <property type="entry name" value="Formate-dependent phosphoribosylglycinamide formyltransferase"/>
    <property type="match status" value="1"/>
</dbReference>
<dbReference type="FunFam" id="3.40.50.20:FF:000007">
    <property type="entry name" value="Formate-dependent phosphoribosylglycinamide formyltransferase"/>
    <property type="match status" value="1"/>
</dbReference>
<dbReference type="Gene3D" id="3.40.50.20">
    <property type="match status" value="1"/>
</dbReference>
<dbReference type="Gene3D" id="3.30.1490.20">
    <property type="entry name" value="ATP-grasp fold, A domain"/>
    <property type="match status" value="1"/>
</dbReference>
<dbReference type="Gene3D" id="3.30.470.20">
    <property type="entry name" value="ATP-grasp fold, B domain"/>
    <property type="match status" value="1"/>
</dbReference>
<dbReference type="HAMAP" id="MF_01643">
    <property type="entry name" value="PurT"/>
    <property type="match status" value="1"/>
</dbReference>
<dbReference type="InterPro" id="IPR011761">
    <property type="entry name" value="ATP-grasp"/>
</dbReference>
<dbReference type="InterPro" id="IPR003135">
    <property type="entry name" value="ATP-grasp_carboxylate-amine"/>
</dbReference>
<dbReference type="InterPro" id="IPR013815">
    <property type="entry name" value="ATP_grasp_subdomain_1"/>
</dbReference>
<dbReference type="InterPro" id="IPR016185">
    <property type="entry name" value="PreATP-grasp_dom_sf"/>
</dbReference>
<dbReference type="InterPro" id="IPR005862">
    <property type="entry name" value="PurT"/>
</dbReference>
<dbReference type="InterPro" id="IPR054350">
    <property type="entry name" value="PurT/PurK_preATP-grasp"/>
</dbReference>
<dbReference type="InterPro" id="IPR048740">
    <property type="entry name" value="PurT_C"/>
</dbReference>
<dbReference type="InterPro" id="IPR011054">
    <property type="entry name" value="Rudment_hybrid_motif"/>
</dbReference>
<dbReference type="NCBIfam" id="NF006766">
    <property type="entry name" value="PRK09288.1"/>
    <property type="match status" value="1"/>
</dbReference>
<dbReference type="NCBIfam" id="TIGR01142">
    <property type="entry name" value="purT"/>
    <property type="match status" value="1"/>
</dbReference>
<dbReference type="PANTHER" id="PTHR43055">
    <property type="entry name" value="FORMATE-DEPENDENT PHOSPHORIBOSYLGLYCINAMIDE FORMYLTRANSFERASE"/>
    <property type="match status" value="1"/>
</dbReference>
<dbReference type="PANTHER" id="PTHR43055:SF1">
    <property type="entry name" value="FORMATE-DEPENDENT PHOSPHORIBOSYLGLYCINAMIDE FORMYLTRANSFERASE"/>
    <property type="match status" value="1"/>
</dbReference>
<dbReference type="Pfam" id="PF02222">
    <property type="entry name" value="ATP-grasp"/>
    <property type="match status" value="1"/>
</dbReference>
<dbReference type="Pfam" id="PF21244">
    <property type="entry name" value="PurT_C"/>
    <property type="match status" value="1"/>
</dbReference>
<dbReference type="Pfam" id="PF22660">
    <property type="entry name" value="RS_preATP-grasp-like"/>
    <property type="match status" value="1"/>
</dbReference>
<dbReference type="SUPFAM" id="SSF56059">
    <property type="entry name" value="Glutathione synthetase ATP-binding domain-like"/>
    <property type="match status" value="1"/>
</dbReference>
<dbReference type="SUPFAM" id="SSF52440">
    <property type="entry name" value="PreATP-grasp domain"/>
    <property type="match status" value="1"/>
</dbReference>
<dbReference type="SUPFAM" id="SSF51246">
    <property type="entry name" value="Rudiment single hybrid motif"/>
    <property type="match status" value="1"/>
</dbReference>
<dbReference type="PROSITE" id="PS50975">
    <property type="entry name" value="ATP_GRASP"/>
    <property type="match status" value="1"/>
</dbReference>